<accession>Q6F9H7</accession>
<name>PXPA_ACIAD</name>
<evidence type="ECO:0000255" key="1">
    <source>
        <dbReference type="HAMAP-Rule" id="MF_00691"/>
    </source>
</evidence>
<feature type="chain" id="PRO_0000184979" description="5-oxoprolinase subunit A">
    <location>
        <begin position="1"/>
        <end position="254"/>
    </location>
</feature>
<protein>
    <recommendedName>
        <fullName evidence="1">5-oxoprolinase subunit A</fullName>
        <shortName evidence="1">5-OPase subunit A</shortName>
        <ecNumber evidence="1">3.5.2.9</ecNumber>
    </recommendedName>
    <alternativeName>
        <fullName evidence="1">5-oxoprolinase (ATP-hydrolyzing) subunit A</fullName>
    </alternativeName>
</protein>
<comment type="function">
    <text evidence="1">Catalyzes the cleavage of 5-oxoproline to form L-glutamate coupled to the hydrolysis of ATP to ADP and inorganic phosphate.</text>
</comment>
<comment type="catalytic activity">
    <reaction evidence="1">
        <text>5-oxo-L-proline + ATP + 2 H2O = L-glutamate + ADP + phosphate + H(+)</text>
        <dbReference type="Rhea" id="RHEA:10348"/>
        <dbReference type="ChEBI" id="CHEBI:15377"/>
        <dbReference type="ChEBI" id="CHEBI:15378"/>
        <dbReference type="ChEBI" id="CHEBI:29985"/>
        <dbReference type="ChEBI" id="CHEBI:30616"/>
        <dbReference type="ChEBI" id="CHEBI:43474"/>
        <dbReference type="ChEBI" id="CHEBI:58402"/>
        <dbReference type="ChEBI" id="CHEBI:456216"/>
        <dbReference type="EC" id="3.5.2.9"/>
    </reaction>
</comment>
<comment type="subunit">
    <text evidence="1">Forms a complex composed of PxpA, PxpB and PxpC.</text>
</comment>
<comment type="similarity">
    <text evidence="1">Belongs to the LamB/PxpA family.</text>
</comment>
<keyword id="KW-0067">ATP-binding</keyword>
<keyword id="KW-0378">Hydrolase</keyword>
<keyword id="KW-0547">Nucleotide-binding</keyword>
<dbReference type="EC" id="3.5.2.9" evidence="1"/>
<dbReference type="EMBL" id="CR543861">
    <property type="protein sequence ID" value="CAG69287.1"/>
    <property type="molecule type" value="Genomic_DNA"/>
</dbReference>
<dbReference type="RefSeq" id="WP_004928566.1">
    <property type="nucleotide sequence ID" value="NC_005966.1"/>
</dbReference>
<dbReference type="SMR" id="Q6F9H7"/>
<dbReference type="STRING" id="202950.GCA_001485005_01495"/>
<dbReference type="GeneID" id="45234806"/>
<dbReference type="KEGG" id="aci:ACIAD2520"/>
<dbReference type="eggNOG" id="COG1540">
    <property type="taxonomic scope" value="Bacteria"/>
</dbReference>
<dbReference type="HOGENOM" id="CLU_069535_0_0_6"/>
<dbReference type="OrthoDB" id="9773478at2"/>
<dbReference type="BioCyc" id="ASP62977:ACIAD_RS11445-MONOMER"/>
<dbReference type="Proteomes" id="UP000000430">
    <property type="component" value="Chromosome"/>
</dbReference>
<dbReference type="GO" id="GO:0017168">
    <property type="term" value="F:5-oxoprolinase (ATP-hydrolyzing) activity"/>
    <property type="evidence" value="ECO:0007669"/>
    <property type="project" value="UniProtKB-UniRule"/>
</dbReference>
<dbReference type="GO" id="GO:0005524">
    <property type="term" value="F:ATP binding"/>
    <property type="evidence" value="ECO:0007669"/>
    <property type="project" value="UniProtKB-UniRule"/>
</dbReference>
<dbReference type="GO" id="GO:0005975">
    <property type="term" value="P:carbohydrate metabolic process"/>
    <property type="evidence" value="ECO:0007669"/>
    <property type="project" value="InterPro"/>
</dbReference>
<dbReference type="CDD" id="cd10787">
    <property type="entry name" value="LamB_YcsF_like"/>
    <property type="match status" value="1"/>
</dbReference>
<dbReference type="Gene3D" id="3.20.20.370">
    <property type="entry name" value="Glycoside hydrolase/deacetylase"/>
    <property type="match status" value="1"/>
</dbReference>
<dbReference type="HAMAP" id="MF_00691">
    <property type="entry name" value="PxpA"/>
    <property type="match status" value="1"/>
</dbReference>
<dbReference type="InterPro" id="IPR011330">
    <property type="entry name" value="Glyco_hydro/deAcase_b/a-brl"/>
</dbReference>
<dbReference type="InterPro" id="IPR005501">
    <property type="entry name" value="LamB/YcsF/PxpA-like"/>
</dbReference>
<dbReference type="NCBIfam" id="NF003814">
    <property type="entry name" value="PRK05406.1-3"/>
    <property type="match status" value="1"/>
</dbReference>
<dbReference type="NCBIfam" id="NF003816">
    <property type="entry name" value="PRK05406.1-5"/>
    <property type="match status" value="1"/>
</dbReference>
<dbReference type="PANTHER" id="PTHR30292:SF0">
    <property type="entry name" value="5-OXOPROLINASE SUBUNIT A"/>
    <property type="match status" value="1"/>
</dbReference>
<dbReference type="PANTHER" id="PTHR30292">
    <property type="entry name" value="UNCHARACTERIZED PROTEIN YBGL-RELATED"/>
    <property type="match status" value="1"/>
</dbReference>
<dbReference type="Pfam" id="PF03746">
    <property type="entry name" value="LamB_YcsF"/>
    <property type="match status" value="1"/>
</dbReference>
<dbReference type="SUPFAM" id="SSF88713">
    <property type="entry name" value="Glycoside hydrolase/deacetylase"/>
    <property type="match status" value="1"/>
</dbReference>
<organism>
    <name type="scientific">Acinetobacter baylyi (strain ATCC 33305 / BD413 / ADP1)</name>
    <dbReference type="NCBI Taxonomy" id="62977"/>
    <lineage>
        <taxon>Bacteria</taxon>
        <taxon>Pseudomonadati</taxon>
        <taxon>Pseudomonadota</taxon>
        <taxon>Gammaproteobacteria</taxon>
        <taxon>Moraxellales</taxon>
        <taxon>Moraxellaceae</taxon>
        <taxon>Acinetobacter</taxon>
    </lineage>
</organism>
<proteinExistence type="inferred from homology"/>
<gene>
    <name evidence="1" type="primary">pxpA</name>
    <name type="ordered locus">ACIAD2520</name>
</gene>
<reference key="1">
    <citation type="journal article" date="2004" name="Nucleic Acids Res.">
        <title>Unique features revealed by the genome sequence of Acinetobacter sp. ADP1, a versatile and naturally transformation competent bacterium.</title>
        <authorList>
            <person name="Barbe V."/>
            <person name="Vallenet D."/>
            <person name="Fonknechten N."/>
            <person name="Kreimeyer A."/>
            <person name="Oztas S."/>
            <person name="Labarre L."/>
            <person name="Cruveiller S."/>
            <person name="Robert C."/>
            <person name="Duprat S."/>
            <person name="Wincker P."/>
            <person name="Ornston L.N."/>
            <person name="Weissenbach J."/>
            <person name="Marliere P."/>
            <person name="Cohen G.N."/>
            <person name="Medigue C."/>
        </authorList>
    </citation>
    <scope>NUCLEOTIDE SEQUENCE [LARGE SCALE GENOMIC DNA]</scope>
    <source>
        <strain>ATCC 33305 / BD413 / ADP1</strain>
    </source>
</reference>
<sequence>MRIDLNSDLGESYGSWIMGNDEQILPMVSSANIACGFHAGDPLGIFKTLKQAAKLGVTVGAHVSYPDLAGFGRRNMQLSYDELLTDVMYQISALQGLAKAAGTTVKYVKPHGALYNTIATDLQQAQAVLDAIKCLDSDLILVGLAGSPLITFAQQNGLNVVAEAFADRAYNADGSLVSRRLAGAVLHDPDFVAKRVVKMIQEGGVISIDGHFTPISAQSICLHGDTDGALSMAAAIRNALLTEGIEIRSFCEVN</sequence>